<name>RL17_RHOOB</name>
<feature type="chain" id="PRO_1000184039" description="Large ribosomal subunit protein bL17">
    <location>
        <begin position="1"/>
        <end position="187"/>
    </location>
</feature>
<dbReference type="EMBL" id="AP011115">
    <property type="protein sequence ID" value="BAH54463.1"/>
    <property type="molecule type" value="Genomic_DNA"/>
</dbReference>
<dbReference type="RefSeq" id="WP_015889926.1">
    <property type="nucleotide sequence ID" value="NC_012522.1"/>
</dbReference>
<dbReference type="SMR" id="C1B042"/>
<dbReference type="STRING" id="632772.ROP_62160"/>
<dbReference type="KEGG" id="rop:ROP_62160"/>
<dbReference type="PATRIC" id="fig|632772.20.peg.6492"/>
<dbReference type="HOGENOM" id="CLU_074407_0_0_11"/>
<dbReference type="OrthoDB" id="9809073at2"/>
<dbReference type="Proteomes" id="UP000002212">
    <property type="component" value="Chromosome"/>
</dbReference>
<dbReference type="GO" id="GO:0022625">
    <property type="term" value="C:cytosolic large ribosomal subunit"/>
    <property type="evidence" value="ECO:0007669"/>
    <property type="project" value="TreeGrafter"/>
</dbReference>
<dbReference type="GO" id="GO:0003735">
    <property type="term" value="F:structural constituent of ribosome"/>
    <property type="evidence" value="ECO:0007669"/>
    <property type="project" value="InterPro"/>
</dbReference>
<dbReference type="GO" id="GO:0006412">
    <property type="term" value="P:translation"/>
    <property type="evidence" value="ECO:0007669"/>
    <property type="project" value="UniProtKB-UniRule"/>
</dbReference>
<dbReference type="FunFam" id="3.90.1030.10:FF:000001">
    <property type="entry name" value="50S ribosomal protein L17"/>
    <property type="match status" value="1"/>
</dbReference>
<dbReference type="Gene3D" id="3.90.1030.10">
    <property type="entry name" value="Ribosomal protein L17"/>
    <property type="match status" value="1"/>
</dbReference>
<dbReference type="HAMAP" id="MF_01368">
    <property type="entry name" value="Ribosomal_bL17"/>
    <property type="match status" value="1"/>
</dbReference>
<dbReference type="InterPro" id="IPR000456">
    <property type="entry name" value="Ribosomal_bL17"/>
</dbReference>
<dbReference type="InterPro" id="IPR047859">
    <property type="entry name" value="Ribosomal_bL17_CS"/>
</dbReference>
<dbReference type="InterPro" id="IPR036373">
    <property type="entry name" value="Ribosomal_bL17_sf"/>
</dbReference>
<dbReference type="NCBIfam" id="TIGR00059">
    <property type="entry name" value="L17"/>
    <property type="match status" value="1"/>
</dbReference>
<dbReference type="PANTHER" id="PTHR14413:SF16">
    <property type="entry name" value="LARGE RIBOSOMAL SUBUNIT PROTEIN BL17M"/>
    <property type="match status" value="1"/>
</dbReference>
<dbReference type="PANTHER" id="PTHR14413">
    <property type="entry name" value="RIBOSOMAL PROTEIN L17"/>
    <property type="match status" value="1"/>
</dbReference>
<dbReference type="Pfam" id="PF01196">
    <property type="entry name" value="Ribosomal_L17"/>
    <property type="match status" value="1"/>
</dbReference>
<dbReference type="SUPFAM" id="SSF64263">
    <property type="entry name" value="Prokaryotic ribosomal protein L17"/>
    <property type="match status" value="1"/>
</dbReference>
<dbReference type="PROSITE" id="PS01167">
    <property type="entry name" value="RIBOSOMAL_L17"/>
    <property type="match status" value="1"/>
</dbReference>
<sequence length="187" mass="20156">MPKPKKGARFGGSASHQKAIFANLATALFEHGRITTTESKAKALRPYAEKLVTHAKAGTLAHRREVLKVIRNKDVVHTLFAEIGPFYADRDGGYTRIIKTVPRKGDNAPMAIIELVKEKTVTSEADRARRVKASQDAPAAAPAEENVVEAVEAEATDAEVENADAVVEAIEDETAADAPEAEEAKKD</sequence>
<keyword id="KW-0687">Ribonucleoprotein</keyword>
<keyword id="KW-0689">Ribosomal protein</keyword>
<accession>C1B042</accession>
<proteinExistence type="inferred from homology"/>
<protein>
    <recommendedName>
        <fullName evidence="1">Large ribosomal subunit protein bL17</fullName>
    </recommendedName>
    <alternativeName>
        <fullName evidence="2">50S ribosomal protein L17</fullName>
    </alternativeName>
</protein>
<reference key="1">
    <citation type="submission" date="2009-03" db="EMBL/GenBank/DDBJ databases">
        <title>Comparison of the complete genome sequences of Rhodococcus erythropolis PR4 and Rhodococcus opacus B4.</title>
        <authorList>
            <person name="Takarada H."/>
            <person name="Sekine M."/>
            <person name="Hosoyama A."/>
            <person name="Yamada R."/>
            <person name="Fujisawa T."/>
            <person name="Omata S."/>
            <person name="Shimizu A."/>
            <person name="Tsukatani N."/>
            <person name="Tanikawa S."/>
            <person name="Fujita N."/>
            <person name="Harayama S."/>
        </authorList>
    </citation>
    <scope>NUCLEOTIDE SEQUENCE [LARGE SCALE GENOMIC DNA]</scope>
    <source>
        <strain>B4</strain>
    </source>
</reference>
<gene>
    <name evidence="1" type="primary">rplQ</name>
    <name type="ordered locus">ROP_62160</name>
</gene>
<comment type="subunit">
    <text evidence="1">Part of the 50S ribosomal subunit. Contacts protein L32.</text>
</comment>
<comment type="similarity">
    <text evidence="1">Belongs to the bacterial ribosomal protein bL17 family.</text>
</comment>
<evidence type="ECO:0000255" key="1">
    <source>
        <dbReference type="HAMAP-Rule" id="MF_01368"/>
    </source>
</evidence>
<evidence type="ECO:0000305" key="2"/>
<organism>
    <name type="scientific">Rhodococcus opacus (strain B4)</name>
    <dbReference type="NCBI Taxonomy" id="632772"/>
    <lineage>
        <taxon>Bacteria</taxon>
        <taxon>Bacillati</taxon>
        <taxon>Actinomycetota</taxon>
        <taxon>Actinomycetes</taxon>
        <taxon>Mycobacteriales</taxon>
        <taxon>Nocardiaceae</taxon>
        <taxon>Rhodococcus</taxon>
    </lineage>
</organism>